<sequence>MTPAPDQLVLRRPDDWHVHLRDDVMLEQVLPATARQFARAIVMPNLRPPVTTVDAAIAYRQRIEAALPDGMAFTPLMTAYLTDDISPDELERGHREGVFTAAKLYPANATTNSAAGVSDLACITAVLERMQAIDMPLLIHGEVTDPDIDIFDREAVFIERHLIPLRRQFPQLRVVFEHITTEQAAQFVVDGDPLMAATITPHHLHINRNAMFQGGLRSDFYCLPVAKRERHRLALRQAATSGDPSFFLGTDSAPHPRAGKESSCGCAGIYNAPYALESYLAVFEAEGALQHFEAFASENGPRFYKLPLNEDTITLKRTAQLVPAQLEGQGLVPFHASEVLDWRLAD</sequence>
<accession>A5GR03</accession>
<feature type="chain" id="PRO_0000325579" description="Dihydroorotase">
    <location>
        <begin position="1"/>
        <end position="346"/>
    </location>
</feature>
<feature type="active site" evidence="1">
    <location>
        <position position="251"/>
    </location>
</feature>
<feature type="binding site" evidence="1">
    <location>
        <position position="17"/>
    </location>
    <ligand>
        <name>Zn(2+)</name>
        <dbReference type="ChEBI" id="CHEBI:29105"/>
        <label>1</label>
    </ligand>
</feature>
<feature type="binding site" evidence="1">
    <location>
        <begin position="19"/>
        <end position="21"/>
    </location>
    <ligand>
        <name>substrate</name>
    </ligand>
</feature>
<feature type="binding site" evidence="1">
    <location>
        <position position="19"/>
    </location>
    <ligand>
        <name>Zn(2+)</name>
        <dbReference type="ChEBI" id="CHEBI:29105"/>
        <label>1</label>
    </ligand>
</feature>
<feature type="binding site" evidence="1">
    <location>
        <position position="45"/>
    </location>
    <ligand>
        <name>substrate</name>
    </ligand>
</feature>
<feature type="binding site" description="via carbamate group" evidence="1">
    <location>
        <position position="103"/>
    </location>
    <ligand>
        <name>Zn(2+)</name>
        <dbReference type="ChEBI" id="CHEBI:29105"/>
        <label>1</label>
    </ligand>
</feature>
<feature type="binding site" description="via carbamate group" evidence="1">
    <location>
        <position position="103"/>
    </location>
    <ligand>
        <name>Zn(2+)</name>
        <dbReference type="ChEBI" id="CHEBI:29105"/>
        <label>2</label>
    </ligand>
</feature>
<feature type="binding site" evidence="1">
    <location>
        <position position="140"/>
    </location>
    <ligand>
        <name>substrate</name>
    </ligand>
</feature>
<feature type="binding site" evidence="1">
    <location>
        <position position="140"/>
    </location>
    <ligand>
        <name>Zn(2+)</name>
        <dbReference type="ChEBI" id="CHEBI:29105"/>
        <label>2</label>
    </ligand>
</feature>
<feature type="binding site" evidence="1">
    <location>
        <position position="178"/>
    </location>
    <ligand>
        <name>Zn(2+)</name>
        <dbReference type="ChEBI" id="CHEBI:29105"/>
        <label>2</label>
    </ligand>
</feature>
<feature type="binding site" evidence="1">
    <location>
        <position position="223"/>
    </location>
    <ligand>
        <name>substrate</name>
    </ligand>
</feature>
<feature type="binding site" evidence="1">
    <location>
        <position position="251"/>
    </location>
    <ligand>
        <name>Zn(2+)</name>
        <dbReference type="ChEBI" id="CHEBI:29105"/>
        <label>1</label>
    </ligand>
</feature>
<feature type="binding site" evidence="1">
    <location>
        <position position="255"/>
    </location>
    <ligand>
        <name>substrate</name>
    </ligand>
</feature>
<feature type="binding site" evidence="1">
    <location>
        <position position="267"/>
    </location>
    <ligand>
        <name>substrate</name>
    </ligand>
</feature>
<feature type="modified residue" description="N6-carboxylysine" evidence="1">
    <location>
        <position position="103"/>
    </location>
</feature>
<name>PYRC_SYNR3</name>
<proteinExistence type="inferred from homology"/>
<reference key="1">
    <citation type="submission" date="2006-05" db="EMBL/GenBank/DDBJ databases">
        <authorList>
            <consortium name="Genoscope"/>
        </authorList>
    </citation>
    <scope>NUCLEOTIDE SEQUENCE [LARGE SCALE GENOMIC DNA]</scope>
    <source>
        <strain>RCC307</strain>
    </source>
</reference>
<keyword id="KW-0378">Hydrolase</keyword>
<keyword id="KW-0479">Metal-binding</keyword>
<keyword id="KW-0665">Pyrimidine biosynthesis</keyword>
<keyword id="KW-1185">Reference proteome</keyword>
<keyword id="KW-0862">Zinc</keyword>
<protein>
    <recommendedName>
        <fullName evidence="1">Dihydroorotase</fullName>
        <shortName evidence="1">DHOase</shortName>
        <ecNumber evidence="1">3.5.2.3</ecNumber>
    </recommendedName>
</protein>
<organism>
    <name type="scientific">Synechococcus sp. (strain RCC307)</name>
    <dbReference type="NCBI Taxonomy" id="316278"/>
    <lineage>
        <taxon>Bacteria</taxon>
        <taxon>Bacillati</taxon>
        <taxon>Cyanobacteriota</taxon>
        <taxon>Cyanophyceae</taxon>
        <taxon>Synechococcales</taxon>
        <taxon>Synechococcaceae</taxon>
        <taxon>Synechococcus</taxon>
    </lineage>
</organism>
<comment type="function">
    <text evidence="1">Catalyzes the reversible cyclization of carbamoyl aspartate to dihydroorotate.</text>
</comment>
<comment type="catalytic activity">
    <reaction evidence="1">
        <text>(S)-dihydroorotate + H2O = N-carbamoyl-L-aspartate + H(+)</text>
        <dbReference type="Rhea" id="RHEA:24296"/>
        <dbReference type="ChEBI" id="CHEBI:15377"/>
        <dbReference type="ChEBI" id="CHEBI:15378"/>
        <dbReference type="ChEBI" id="CHEBI:30864"/>
        <dbReference type="ChEBI" id="CHEBI:32814"/>
        <dbReference type="EC" id="3.5.2.3"/>
    </reaction>
</comment>
<comment type="cofactor">
    <cofactor evidence="1">
        <name>Zn(2+)</name>
        <dbReference type="ChEBI" id="CHEBI:29105"/>
    </cofactor>
    <text evidence="1">Binds 2 Zn(2+) ions per subunit.</text>
</comment>
<comment type="pathway">
    <text evidence="1">Pyrimidine metabolism; UMP biosynthesis via de novo pathway; (S)-dihydroorotate from bicarbonate: step 3/3.</text>
</comment>
<comment type="subunit">
    <text evidence="1">Homodimer.</text>
</comment>
<comment type="similarity">
    <text evidence="1">Belongs to the metallo-dependent hydrolases superfamily. DHOase family. Class II DHOase subfamily.</text>
</comment>
<gene>
    <name evidence="1" type="primary">pyrC</name>
    <name type="ordered locus">SynRCC307_0409</name>
</gene>
<dbReference type="EC" id="3.5.2.3" evidence="1"/>
<dbReference type="EMBL" id="CT978603">
    <property type="protein sequence ID" value="CAK27312.1"/>
    <property type="molecule type" value="Genomic_DNA"/>
</dbReference>
<dbReference type="SMR" id="A5GR03"/>
<dbReference type="STRING" id="316278.SynRCC307_0409"/>
<dbReference type="KEGG" id="syr:SynRCC307_0409"/>
<dbReference type="eggNOG" id="COG0418">
    <property type="taxonomic scope" value="Bacteria"/>
</dbReference>
<dbReference type="HOGENOM" id="CLU_041558_1_0_3"/>
<dbReference type="OrthoDB" id="9808095at2"/>
<dbReference type="UniPathway" id="UPA00070">
    <property type="reaction ID" value="UER00117"/>
</dbReference>
<dbReference type="Proteomes" id="UP000001115">
    <property type="component" value="Chromosome"/>
</dbReference>
<dbReference type="GO" id="GO:0005829">
    <property type="term" value="C:cytosol"/>
    <property type="evidence" value="ECO:0007669"/>
    <property type="project" value="TreeGrafter"/>
</dbReference>
<dbReference type="GO" id="GO:0004151">
    <property type="term" value="F:dihydroorotase activity"/>
    <property type="evidence" value="ECO:0007669"/>
    <property type="project" value="UniProtKB-UniRule"/>
</dbReference>
<dbReference type="GO" id="GO:0008270">
    <property type="term" value="F:zinc ion binding"/>
    <property type="evidence" value="ECO:0007669"/>
    <property type="project" value="UniProtKB-UniRule"/>
</dbReference>
<dbReference type="GO" id="GO:0006207">
    <property type="term" value="P:'de novo' pyrimidine nucleobase biosynthetic process"/>
    <property type="evidence" value="ECO:0007669"/>
    <property type="project" value="TreeGrafter"/>
</dbReference>
<dbReference type="GO" id="GO:0044205">
    <property type="term" value="P:'de novo' UMP biosynthetic process"/>
    <property type="evidence" value="ECO:0007669"/>
    <property type="project" value="UniProtKB-UniRule"/>
</dbReference>
<dbReference type="CDD" id="cd01294">
    <property type="entry name" value="DHOase"/>
    <property type="match status" value="1"/>
</dbReference>
<dbReference type="Gene3D" id="3.20.20.140">
    <property type="entry name" value="Metal-dependent hydrolases"/>
    <property type="match status" value="1"/>
</dbReference>
<dbReference type="HAMAP" id="MF_00219">
    <property type="entry name" value="PyrC_classII"/>
    <property type="match status" value="1"/>
</dbReference>
<dbReference type="InterPro" id="IPR006680">
    <property type="entry name" value="Amidohydro-rel"/>
</dbReference>
<dbReference type="InterPro" id="IPR004721">
    <property type="entry name" value="DHOdimr"/>
</dbReference>
<dbReference type="InterPro" id="IPR002195">
    <property type="entry name" value="Dihydroorotase_CS"/>
</dbReference>
<dbReference type="InterPro" id="IPR032466">
    <property type="entry name" value="Metal_Hydrolase"/>
</dbReference>
<dbReference type="NCBIfam" id="TIGR00856">
    <property type="entry name" value="pyrC_dimer"/>
    <property type="match status" value="1"/>
</dbReference>
<dbReference type="PANTHER" id="PTHR43137">
    <property type="entry name" value="DIHYDROOROTASE"/>
    <property type="match status" value="1"/>
</dbReference>
<dbReference type="PANTHER" id="PTHR43137:SF1">
    <property type="entry name" value="DIHYDROOROTASE"/>
    <property type="match status" value="1"/>
</dbReference>
<dbReference type="Pfam" id="PF01979">
    <property type="entry name" value="Amidohydro_1"/>
    <property type="match status" value="1"/>
</dbReference>
<dbReference type="PIRSF" id="PIRSF001237">
    <property type="entry name" value="DHOdimr"/>
    <property type="match status" value="1"/>
</dbReference>
<dbReference type="SUPFAM" id="SSF51556">
    <property type="entry name" value="Metallo-dependent hydrolases"/>
    <property type="match status" value="1"/>
</dbReference>
<dbReference type="PROSITE" id="PS00483">
    <property type="entry name" value="DIHYDROOROTASE_2"/>
    <property type="match status" value="1"/>
</dbReference>
<evidence type="ECO:0000255" key="1">
    <source>
        <dbReference type="HAMAP-Rule" id="MF_00219"/>
    </source>
</evidence>